<gene>
    <name type="primary">WNT-4</name>
</gene>
<dbReference type="EMBL" id="M91278">
    <property type="protein sequence ID" value="AAA49256.1"/>
    <property type="molecule type" value="Genomic_DNA"/>
</dbReference>
<dbReference type="SMR" id="P28116"/>
<dbReference type="GlyCosmos" id="P28116">
    <property type="glycosylation" value="1 site, No reported glycans"/>
</dbReference>
<dbReference type="GO" id="GO:0005615">
    <property type="term" value="C:extracellular space"/>
    <property type="evidence" value="ECO:0007669"/>
    <property type="project" value="TreeGrafter"/>
</dbReference>
<dbReference type="GO" id="GO:0005125">
    <property type="term" value="F:cytokine activity"/>
    <property type="evidence" value="ECO:0007669"/>
    <property type="project" value="TreeGrafter"/>
</dbReference>
<dbReference type="GO" id="GO:0005109">
    <property type="term" value="F:frizzled binding"/>
    <property type="evidence" value="ECO:0007669"/>
    <property type="project" value="TreeGrafter"/>
</dbReference>
<dbReference type="GO" id="GO:0060070">
    <property type="term" value="P:canonical Wnt signaling pathway"/>
    <property type="evidence" value="ECO:0007669"/>
    <property type="project" value="TreeGrafter"/>
</dbReference>
<dbReference type="GO" id="GO:0045165">
    <property type="term" value="P:cell fate commitment"/>
    <property type="evidence" value="ECO:0007669"/>
    <property type="project" value="TreeGrafter"/>
</dbReference>
<dbReference type="GO" id="GO:0030182">
    <property type="term" value="P:neuron differentiation"/>
    <property type="evidence" value="ECO:0007669"/>
    <property type="project" value="TreeGrafter"/>
</dbReference>
<dbReference type="FunFam" id="3.30.2460.20:FF:000008">
    <property type="entry name" value="Protein Wnt-4"/>
    <property type="match status" value="1"/>
</dbReference>
<dbReference type="Gene3D" id="3.30.2460.20">
    <property type="match status" value="1"/>
</dbReference>
<dbReference type="InterPro" id="IPR005817">
    <property type="entry name" value="Wnt"/>
</dbReference>
<dbReference type="InterPro" id="IPR043158">
    <property type="entry name" value="Wnt_C"/>
</dbReference>
<dbReference type="PANTHER" id="PTHR12027:SF101">
    <property type="entry name" value="PROTEIN WNT-4"/>
    <property type="match status" value="1"/>
</dbReference>
<dbReference type="PANTHER" id="PTHR12027">
    <property type="entry name" value="WNT RELATED"/>
    <property type="match status" value="1"/>
</dbReference>
<dbReference type="Pfam" id="PF00110">
    <property type="entry name" value="wnt"/>
    <property type="match status" value="1"/>
</dbReference>
<dbReference type="SMART" id="SM00097">
    <property type="entry name" value="WNT1"/>
    <property type="match status" value="1"/>
</dbReference>
<protein>
    <recommendedName>
        <fullName>Protein Wnt-4</fullName>
    </recommendedName>
</protein>
<proteinExistence type="inferred from homology"/>
<reference key="1">
    <citation type="journal article" date="1992" name="Proc. Natl. Acad. Sci. U.S.A.">
        <title>Diversification of the Wnt gene family on the ancestral lineage of vertebrates.</title>
        <authorList>
            <person name="Sidow A."/>
        </authorList>
    </citation>
    <scope>NUCLEOTIDE SEQUENCE [GENOMIC DNA]</scope>
</reference>
<evidence type="ECO:0000250" key="1">
    <source>
        <dbReference type="UniProtKB" id="P22724"/>
    </source>
</evidence>
<evidence type="ECO:0000250" key="2">
    <source>
        <dbReference type="UniProtKB" id="P27467"/>
    </source>
</evidence>
<evidence type="ECO:0000250" key="3">
    <source>
        <dbReference type="UniProtKB" id="P28026"/>
    </source>
</evidence>
<evidence type="ECO:0000250" key="4">
    <source>
        <dbReference type="UniProtKB" id="P56704"/>
    </source>
</evidence>
<evidence type="ECO:0000255" key="5"/>
<evidence type="ECO:0000305" key="6"/>
<name>WNT4_PLESK</name>
<sequence>SGSCEVKTCWKAMPPFRKVGNVLKEKFDGATEVEQRKIGSTKVLVPKNSQFKPHTDEDLVYLDSSPDFCDHDLKNGVLGTSGRHCNKTSKAIDGCELMCCGRGFHTDEVEVVERCSCKF</sequence>
<comment type="function">
    <text evidence="1 6">Ligand for members of the frizzled family of seven transmembrane receptors (Probable). Plays an important role in embryonic development (By similarity).</text>
</comment>
<comment type="subcellular location">
    <subcellularLocation>
        <location>Secreted</location>
        <location>Extracellular space</location>
        <location>Extracellular matrix</location>
    </subcellularLocation>
</comment>
<comment type="PTM">
    <text evidence="2 4">Palmitoleoylation is required for efficient binding to frizzled receptors. Depalmitoleoylation leads to Wnt signaling pathway inhibition.</text>
</comment>
<comment type="similarity">
    <text evidence="6">Belongs to the Wnt family.</text>
</comment>
<keyword id="KW-0217">Developmental protein</keyword>
<keyword id="KW-1015">Disulfide bond</keyword>
<keyword id="KW-0272">Extracellular matrix</keyword>
<keyword id="KW-0325">Glycoprotein</keyword>
<keyword id="KW-0449">Lipoprotein</keyword>
<keyword id="KW-0964">Secreted</keyword>
<keyword id="KW-0879">Wnt signaling pathway</keyword>
<organism>
    <name type="scientific">Plestiodon skiltonianus</name>
    <name type="common">Western skink</name>
    <name type="synonym">Eumeces skiltonianus</name>
    <dbReference type="NCBI Taxonomy" id="463545"/>
    <lineage>
        <taxon>Eukaryota</taxon>
        <taxon>Metazoa</taxon>
        <taxon>Chordata</taxon>
        <taxon>Craniata</taxon>
        <taxon>Vertebrata</taxon>
        <taxon>Euteleostomi</taxon>
        <taxon>Lepidosauria</taxon>
        <taxon>Squamata</taxon>
        <taxon>Bifurcata</taxon>
        <taxon>Unidentata</taxon>
        <taxon>Scinciformata</taxon>
        <taxon>Scincidae</taxon>
        <taxon>Scincinae</taxon>
        <taxon>Plestiodon</taxon>
    </lineage>
</organism>
<accession>P28116</accession>
<feature type="chain" id="PRO_0000200622" description="Protein Wnt-4">
    <location>
        <begin position="1" status="less than"/>
        <end position="119" status="greater than"/>
    </location>
</feature>
<feature type="lipid moiety-binding region" description="O-palmitoleoyl serine; by PORCN" evidence="4">
    <location>
        <position position="1"/>
    </location>
</feature>
<feature type="glycosylation site" description="N-linked (GlcNAc...) asparagine" evidence="5">
    <location>
        <position position="86"/>
    </location>
</feature>
<feature type="disulfide bond" evidence="3">
    <location>
        <begin position="69"/>
        <end position="100"/>
    </location>
</feature>
<feature type="disulfide bond" evidence="3">
    <location>
        <begin position="85"/>
        <end position="95"/>
    </location>
</feature>
<feature type="non-terminal residue">
    <location>
        <position position="1"/>
    </location>
</feature>
<feature type="non-terminal residue">
    <location>
        <position position="119"/>
    </location>
</feature>